<dbReference type="EC" id="2.1.3.-" evidence="1"/>
<dbReference type="EMBL" id="CP000513">
    <property type="protein sequence ID" value="ABQ13169.1"/>
    <property type="molecule type" value="Genomic_DNA"/>
</dbReference>
<dbReference type="RefSeq" id="WP_012030817.1">
    <property type="nucleotide sequence ID" value="NC_009446.1"/>
</dbReference>
<dbReference type="SMR" id="A5EVQ4"/>
<dbReference type="STRING" id="246195.DNO_0481"/>
<dbReference type="KEGG" id="dno:DNO_0481"/>
<dbReference type="eggNOG" id="COG2226">
    <property type="taxonomic scope" value="Bacteria"/>
</dbReference>
<dbReference type="HOGENOM" id="CLU_078475_0_0_6"/>
<dbReference type="OrthoDB" id="9779941at2"/>
<dbReference type="Proteomes" id="UP000000248">
    <property type="component" value="Chromosome"/>
</dbReference>
<dbReference type="GO" id="GO:0016743">
    <property type="term" value="F:carboxyl- or carbamoyltransferase activity"/>
    <property type="evidence" value="ECO:0007669"/>
    <property type="project" value="UniProtKB-UniRule"/>
</dbReference>
<dbReference type="GO" id="GO:1904047">
    <property type="term" value="F:S-adenosyl-L-methionine binding"/>
    <property type="evidence" value="ECO:0007669"/>
    <property type="project" value="UniProtKB-UniRule"/>
</dbReference>
<dbReference type="GO" id="GO:0002098">
    <property type="term" value="P:tRNA wobble uridine modification"/>
    <property type="evidence" value="ECO:0007669"/>
    <property type="project" value="InterPro"/>
</dbReference>
<dbReference type="CDD" id="cd02440">
    <property type="entry name" value="AdoMet_MTases"/>
    <property type="match status" value="1"/>
</dbReference>
<dbReference type="Gene3D" id="3.40.50.150">
    <property type="entry name" value="Vaccinia Virus protein VP39"/>
    <property type="match status" value="1"/>
</dbReference>
<dbReference type="HAMAP" id="MF_01589">
    <property type="entry name" value="Cx_SAM_synthase"/>
    <property type="match status" value="1"/>
</dbReference>
<dbReference type="InterPro" id="IPR005271">
    <property type="entry name" value="CmoA"/>
</dbReference>
<dbReference type="InterPro" id="IPR041698">
    <property type="entry name" value="Methyltransf_25"/>
</dbReference>
<dbReference type="InterPro" id="IPR029063">
    <property type="entry name" value="SAM-dependent_MTases_sf"/>
</dbReference>
<dbReference type="NCBIfam" id="TIGR00740">
    <property type="entry name" value="carboxy-S-adenosyl-L-methionine synthase CmoA"/>
    <property type="match status" value="1"/>
</dbReference>
<dbReference type="PANTHER" id="PTHR43861:SF2">
    <property type="entry name" value="CARBOXY-S-ADENOSYL-L-METHIONINE SYNTHASE"/>
    <property type="match status" value="1"/>
</dbReference>
<dbReference type="PANTHER" id="PTHR43861">
    <property type="entry name" value="TRANS-ACONITATE 2-METHYLTRANSFERASE-RELATED"/>
    <property type="match status" value="1"/>
</dbReference>
<dbReference type="Pfam" id="PF13649">
    <property type="entry name" value="Methyltransf_25"/>
    <property type="match status" value="1"/>
</dbReference>
<dbReference type="PIRSF" id="PIRSF006325">
    <property type="entry name" value="MeTrfase_bac"/>
    <property type="match status" value="1"/>
</dbReference>
<dbReference type="SUPFAM" id="SSF53335">
    <property type="entry name" value="S-adenosyl-L-methionine-dependent methyltransferases"/>
    <property type="match status" value="1"/>
</dbReference>
<reference key="1">
    <citation type="journal article" date="2007" name="Nat. Biotechnol.">
        <title>Genome sequence and identification of candidate vaccine antigens from the animal pathogen Dichelobacter nodosus.</title>
        <authorList>
            <person name="Myers G.S.A."/>
            <person name="Parker D."/>
            <person name="Al-Hasani K."/>
            <person name="Kennan R.M."/>
            <person name="Seemann T."/>
            <person name="Ren Q."/>
            <person name="Badger J.H."/>
            <person name="Selengut J.D."/>
            <person name="Deboy R.T."/>
            <person name="Tettelin H."/>
            <person name="Boyce J.D."/>
            <person name="McCarl V.P."/>
            <person name="Han X."/>
            <person name="Nelson W.C."/>
            <person name="Madupu R."/>
            <person name="Mohamoud Y."/>
            <person name="Holley T."/>
            <person name="Fedorova N."/>
            <person name="Khouri H."/>
            <person name="Bottomley S.P."/>
            <person name="Whittington R.J."/>
            <person name="Adler B."/>
            <person name="Songer J.G."/>
            <person name="Rood J.I."/>
            <person name="Paulsen I.T."/>
        </authorList>
    </citation>
    <scope>NUCLEOTIDE SEQUENCE [LARGE SCALE GENOMIC DNA]</scope>
    <source>
        <strain>VCS1703A</strain>
    </source>
</reference>
<proteinExistence type="inferred from homology"/>
<comment type="function">
    <text evidence="1">Catalyzes the conversion of S-adenosyl-L-methionine (SAM) to carboxy-S-adenosyl-L-methionine (Cx-SAM).</text>
</comment>
<comment type="catalytic activity">
    <reaction evidence="1">
        <text>prephenate + S-adenosyl-L-methionine = carboxy-S-adenosyl-L-methionine + 3-phenylpyruvate + H2O</text>
        <dbReference type="Rhea" id="RHEA:51692"/>
        <dbReference type="ChEBI" id="CHEBI:15377"/>
        <dbReference type="ChEBI" id="CHEBI:18005"/>
        <dbReference type="ChEBI" id="CHEBI:29934"/>
        <dbReference type="ChEBI" id="CHEBI:59789"/>
        <dbReference type="ChEBI" id="CHEBI:134278"/>
    </reaction>
</comment>
<comment type="subunit">
    <text evidence="1">Homodimer.</text>
</comment>
<comment type="similarity">
    <text evidence="1">Belongs to the class I-like SAM-binding methyltransferase superfamily. Cx-SAM synthase family.</text>
</comment>
<accession>A5EVQ4</accession>
<protein>
    <recommendedName>
        <fullName evidence="1">Carboxy-S-adenosyl-L-methionine synthase</fullName>
        <shortName evidence="1">Cx-SAM synthase</shortName>
        <ecNumber evidence="1">2.1.3.-</ecNumber>
    </recommendedName>
</protein>
<evidence type="ECO:0000255" key="1">
    <source>
        <dbReference type="HAMAP-Rule" id="MF_01589"/>
    </source>
</evidence>
<keyword id="KW-1185">Reference proteome</keyword>
<keyword id="KW-0949">S-adenosyl-L-methionine</keyword>
<keyword id="KW-0808">Transferase</keyword>
<organism>
    <name type="scientific">Dichelobacter nodosus (strain VCS1703A)</name>
    <dbReference type="NCBI Taxonomy" id="246195"/>
    <lineage>
        <taxon>Bacteria</taxon>
        <taxon>Pseudomonadati</taxon>
        <taxon>Pseudomonadota</taxon>
        <taxon>Gammaproteobacteria</taxon>
        <taxon>Cardiobacteriales</taxon>
        <taxon>Cardiobacteriaceae</taxon>
        <taxon>Dichelobacter</taxon>
    </lineage>
</organism>
<gene>
    <name evidence="1" type="primary">cmoA</name>
    <name type="ordered locus">DNO_0481</name>
</gene>
<feature type="chain" id="PRO_0000314323" description="Carboxy-S-adenosyl-L-methionine synthase">
    <location>
        <begin position="1"/>
        <end position="237"/>
    </location>
</feature>
<feature type="binding site" evidence="1">
    <location>
        <position position="40"/>
    </location>
    <ligand>
        <name>S-adenosyl-L-methionine</name>
        <dbReference type="ChEBI" id="CHEBI:59789"/>
    </ligand>
</feature>
<feature type="binding site" evidence="1">
    <location>
        <begin position="65"/>
        <end position="67"/>
    </location>
    <ligand>
        <name>S-adenosyl-L-methionine</name>
        <dbReference type="ChEBI" id="CHEBI:59789"/>
    </ligand>
</feature>
<feature type="binding site" evidence="1">
    <location>
        <begin position="116"/>
        <end position="117"/>
    </location>
    <ligand>
        <name>S-adenosyl-L-methionine</name>
        <dbReference type="ChEBI" id="CHEBI:59789"/>
    </ligand>
</feature>
<feature type="binding site" evidence="1">
    <location>
        <position position="131"/>
    </location>
    <ligand>
        <name>S-adenosyl-L-methionine</name>
        <dbReference type="ChEBI" id="CHEBI:59789"/>
    </ligand>
</feature>
<feature type="binding site" evidence="1">
    <location>
        <position position="194"/>
    </location>
    <ligand>
        <name>S-adenosyl-L-methionine</name>
        <dbReference type="ChEBI" id="CHEBI:59789"/>
    </ligand>
</feature>
<sequence length="237" mass="26674">MNEFFRDDIFNRPQNVVDFRFDERTAAVFPDMIHRSIPAYASLLHMLGVIAGTYVQEGDHIYDLGCSLGGATLSLSRFIPKTAHITAVDSSPAMVQRFRAYVEGAALHHIEVLEADIIHLPLKSSRVIVMNFVLQFIPPPARDALIAKIYQALTEGGILLLAEKTQPEDDLLRTWHEAFKASQGYSALAIAQKREALENVMKIETETAERVRLQAAGFRRVLPYFQGMMFKAWVAIK</sequence>
<name>CMOA_DICNV</name>